<dbReference type="EC" id="4.2.1.9" evidence="1"/>
<dbReference type="EMBL" id="CP000702">
    <property type="protein sequence ID" value="ABQ46397.1"/>
    <property type="molecule type" value="Genomic_DNA"/>
</dbReference>
<dbReference type="RefSeq" id="WP_011943030.1">
    <property type="nucleotide sequence ID" value="NC_009486.1"/>
</dbReference>
<dbReference type="SMR" id="A5IJM4"/>
<dbReference type="STRING" id="390874.Tpet_0369"/>
<dbReference type="KEGG" id="tpt:Tpet_0369"/>
<dbReference type="eggNOG" id="COG0129">
    <property type="taxonomic scope" value="Bacteria"/>
</dbReference>
<dbReference type="HOGENOM" id="CLU_014271_4_2_0"/>
<dbReference type="UniPathway" id="UPA00047">
    <property type="reaction ID" value="UER00057"/>
</dbReference>
<dbReference type="UniPathway" id="UPA00049">
    <property type="reaction ID" value="UER00061"/>
</dbReference>
<dbReference type="Proteomes" id="UP000006558">
    <property type="component" value="Chromosome"/>
</dbReference>
<dbReference type="GO" id="GO:0005829">
    <property type="term" value="C:cytosol"/>
    <property type="evidence" value="ECO:0007669"/>
    <property type="project" value="TreeGrafter"/>
</dbReference>
<dbReference type="GO" id="GO:0051537">
    <property type="term" value="F:2 iron, 2 sulfur cluster binding"/>
    <property type="evidence" value="ECO:0007669"/>
    <property type="project" value="UniProtKB-UniRule"/>
</dbReference>
<dbReference type="GO" id="GO:0004160">
    <property type="term" value="F:dihydroxy-acid dehydratase activity"/>
    <property type="evidence" value="ECO:0007669"/>
    <property type="project" value="UniProtKB-UniRule"/>
</dbReference>
<dbReference type="GO" id="GO:0000287">
    <property type="term" value="F:magnesium ion binding"/>
    <property type="evidence" value="ECO:0007669"/>
    <property type="project" value="UniProtKB-UniRule"/>
</dbReference>
<dbReference type="GO" id="GO:0009097">
    <property type="term" value="P:isoleucine biosynthetic process"/>
    <property type="evidence" value="ECO:0007669"/>
    <property type="project" value="UniProtKB-UniRule"/>
</dbReference>
<dbReference type="GO" id="GO:0009099">
    <property type="term" value="P:L-valine biosynthetic process"/>
    <property type="evidence" value="ECO:0007669"/>
    <property type="project" value="UniProtKB-UniRule"/>
</dbReference>
<dbReference type="FunFam" id="3.50.30.80:FF:000001">
    <property type="entry name" value="Dihydroxy-acid dehydratase"/>
    <property type="match status" value="1"/>
</dbReference>
<dbReference type="Gene3D" id="3.50.30.80">
    <property type="entry name" value="IlvD/EDD C-terminal domain-like"/>
    <property type="match status" value="1"/>
</dbReference>
<dbReference type="HAMAP" id="MF_00012">
    <property type="entry name" value="IlvD"/>
    <property type="match status" value="1"/>
</dbReference>
<dbReference type="InterPro" id="IPR042096">
    <property type="entry name" value="Dihydro-acid_dehy_C"/>
</dbReference>
<dbReference type="InterPro" id="IPR004404">
    <property type="entry name" value="DihydroxyA_deHydtase"/>
</dbReference>
<dbReference type="InterPro" id="IPR020558">
    <property type="entry name" value="DiOHA_6PGluconate_deHydtase_CS"/>
</dbReference>
<dbReference type="InterPro" id="IPR056740">
    <property type="entry name" value="ILV_EDD_C"/>
</dbReference>
<dbReference type="InterPro" id="IPR000581">
    <property type="entry name" value="ILV_EDD_N"/>
</dbReference>
<dbReference type="InterPro" id="IPR037237">
    <property type="entry name" value="IlvD/EDD_N"/>
</dbReference>
<dbReference type="NCBIfam" id="TIGR00110">
    <property type="entry name" value="ilvD"/>
    <property type="match status" value="1"/>
</dbReference>
<dbReference type="NCBIfam" id="NF002068">
    <property type="entry name" value="PRK00911.1"/>
    <property type="match status" value="1"/>
</dbReference>
<dbReference type="PANTHER" id="PTHR43661">
    <property type="entry name" value="D-XYLONATE DEHYDRATASE"/>
    <property type="match status" value="1"/>
</dbReference>
<dbReference type="PANTHER" id="PTHR43661:SF3">
    <property type="entry name" value="D-XYLONATE DEHYDRATASE YAGF-RELATED"/>
    <property type="match status" value="1"/>
</dbReference>
<dbReference type="Pfam" id="PF24877">
    <property type="entry name" value="ILV_EDD_C"/>
    <property type="match status" value="1"/>
</dbReference>
<dbReference type="Pfam" id="PF00920">
    <property type="entry name" value="ILVD_EDD_N"/>
    <property type="match status" value="1"/>
</dbReference>
<dbReference type="SUPFAM" id="SSF143975">
    <property type="entry name" value="IlvD/EDD N-terminal domain-like"/>
    <property type="match status" value="1"/>
</dbReference>
<dbReference type="SUPFAM" id="SSF52016">
    <property type="entry name" value="LeuD/IlvD-like"/>
    <property type="match status" value="1"/>
</dbReference>
<dbReference type="PROSITE" id="PS00886">
    <property type="entry name" value="ILVD_EDD_1"/>
    <property type="match status" value="1"/>
</dbReference>
<dbReference type="PROSITE" id="PS00887">
    <property type="entry name" value="ILVD_EDD_2"/>
    <property type="match status" value="1"/>
</dbReference>
<sequence length="554" mass="59725">MRSDVIKKGLERAPHRSLLKALGITDDEMRRPFIGIVSSWNEIIPGHVHLDKVVEAVKAGVRMAGGVPFVFPTIGICDGIAMDHRGMKFSLPSRELIADSIEIVASGFPFDGLVFVPNCDKITPGMMMAMGRLNIPSVLISGGPMLAGRYNGRDIDLITVFEAVGGYKVGKVDEETLKAIEDLACPGAGSCAGLFTANTMNSLAEALGIAPRGNGTVPAVHAKRLRMAKEAGMLVVELVKRDVKPRDIVTLDSFMNAVMVDLATGGSTNTVLHLKAIAESFGIDFDIKLFDELSRKIPHICNISPVGPYHIQDLDDAGGIYAVMKRLQENGLLKEDAMTIYLRKIGDLVREAKILNEDVIRPFDNPYHKEGGLGILFGNLAPEGAVAKLSGVPEKMMHHVGPAVVFEDGEEATKAILSGKIKKGDVVVIRYEGPKGGPGMREMLSPTSAIVGMGLAEDVALITDGRFSGGSHGAVIGHVSPEAAEGGPIGIVKDGDLIEIDFEKRTLNLLISDEEFERRMKEFTPLVKEVDSDYLRRYAFFVQSASKGAIFRKP</sequence>
<name>ILVD_THEP1</name>
<proteinExistence type="inferred from homology"/>
<reference key="1">
    <citation type="submission" date="2007-05" db="EMBL/GenBank/DDBJ databases">
        <title>Complete sequence of Thermotoga petrophila RKU-1.</title>
        <authorList>
            <consortium name="US DOE Joint Genome Institute"/>
            <person name="Copeland A."/>
            <person name="Lucas S."/>
            <person name="Lapidus A."/>
            <person name="Barry K."/>
            <person name="Glavina del Rio T."/>
            <person name="Dalin E."/>
            <person name="Tice H."/>
            <person name="Pitluck S."/>
            <person name="Sims D."/>
            <person name="Brettin T."/>
            <person name="Bruce D."/>
            <person name="Detter J.C."/>
            <person name="Han C."/>
            <person name="Tapia R."/>
            <person name="Schmutz J."/>
            <person name="Larimer F."/>
            <person name="Land M."/>
            <person name="Hauser L."/>
            <person name="Kyrpides N."/>
            <person name="Mikhailova N."/>
            <person name="Nelson K."/>
            <person name="Gogarten J.P."/>
            <person name="Noll K."/>
            <person name="Richardson P."/>
        </authorList>
    </citation>
    <scope>NUCLEOTIDE SEQUENCE [LARGE SCALE GENOMIC DNA]</scope>
    <source>
        <strain>ATCC BAA-488 / DSM 13995 / JCM 10881 / RKU-1</strain>
    </source>
</reference>
<comment type="function">
    <text evidence="1">Functions in the biosynthesis of branched-chain amino acids. Catalyzes the dehydration of (2R,3R)-2,3-dihydroxy-3-methylpentanoate (2,3-dihydroxy-3-methylvalerate) into 2-oxo-3-methylpentanoate (2-oxo-3-methylvalerate) and of (2R)-2,3-dihydroxy-3-methylbutanoate (2,3-dihydroxyisovalerate) into 2-oxo-3-methylbutanoate (2-oxoisovalerate), the penultimate precursor to L-isoleucine and L-valine, respectively.</text>
</comment>
<comment type="catalytic activity">
    <reaction evidence="1">
        <text>(2R)-2,3-dihydroxy-3-methylbutanoate = 3-methyl-2-oxobutanoate + H2O</text>
        <dbReference type="Rhea" id="RHEA:24809"/>
        <dbReference type="ChEBI" id="CHEBI:11851"/>
        <dbReference type="ChEBI" id="CHEBI:15377"/>
        <dbReference type="ChEBI" id="CHEBI:49072"/>
        <dbReference type="EC" id="4.2.1.9"/>
    </reaction>
    <physiologicalReaction direction="left-to-right" evidence="1">
        <dbReference type="Rhea" id="RHEA:24810"/>
    </physiologicalReaction>
</comment>
<comment type="catalytic activity">
    <reaction evidence="1">
        <text>(2R,3R)-2,3-dihydroxy-3-methylpentanoate = (S)-3-methyl-2-oxopentanoate + H2O</text>
        <dbReference type="Rhea" id="RHEA:27694"/>
        <dbReference type="ChEBI" id="CHEBI:15377"/>
        <dbReference type="ChEBI" id="CHEBI:35146"/>
        <dbReference type="ChEBI" id="CHEBI:49258"/>
        <dbReference type="EC" id="4.2.1.9"/>
    </reaction>
    <physiologicalReaction direction="left-to-right" evidence="1">
        <dbReference type="Rhea" id="RHEA:27695"/>
    </physiologicalReaction>
</comment>
<comment type="cofactor">
    <cofactor evidence="1">
        <name>[2Fe-2S] cluster</name>
        <dbReference type="ChEBI" id="CHEBI:190135"/>
    </cofactor>
    <text evidence="1">Binds 1 [2Fe-2S] cluster per subunit. This cluster acts as a Lewis acid cofactor.</text>
</comment>
<comment type="cofactor">
    <cofactor evidence="1">
        <name>Mg(2+)</name>
        <dbReference type="ChEBI" id="CHEBI:18420"/>
    </cofactor>
</comment>
<comment type="pathway">
    <text evidence="1">Amino-acid biosynthesis; L-isoleucine biosynthesis; L-isoleucine from 2-oxobutanoate: step 3/4.</text>
</comment>
<comment type="pathway">
    <text evidence="1">Amino-acid biosynthesis; L-valine biosynthesis; L-valine from pyruvate: step 3/4.</text>
</comment>
<comment type="subunit">
    <text evidence="1">Homodimer.</text>
</comment>
<comment type="similarity">
    <text evidence="1">Belongs to the IlvD/Edd family.</text>
</comment>
<protein>
    <recommendedName>
        <fullName evidence="1">Dihydroxy-acid dehydratase</fullName>
        <shortName evidence="1">DAD</shortName>
        <ecNumber evidence="1">4.2.1.9</ecNumber>
    </recommendedName>
</protein>
<accession>A5IJM4</accession>
<keyword id="KW-0001">2Fe-2S</keyword>
<keyword id="KW-0028">Amino-acid biosynthesis</keyword>
<keyword id="KW-0100">Branched-chain amino acid biosynthesis</keyword>
<keyword id="KW-0408">Iron</keyword>
<keyword id="KW-0411">Iron-sulfur</keyword>
<keyword id="KW-0456">Lyase</keyword>
<keyword id="KW-0460">Magnesium</keyword>
<keyword id="KW-0479">Metal-binding</keyword>
<gene>
    <name evidence="1" type="primary">ilvD</name>
    <name type="ordered locus">Tpet_0369</name>
</gene>
<evidence type="ECO:0000255" key="1">
    <source>
        <dbReference type="HAMAP-Rule" id="MF_00012"/>
    </source>
</evidence>
<organism>
    <name type="scientific">Thermotoga petrophila (strain ATCC BAA-488 / DSM 13995 / JCM 10881 / RKU-1)</name>
    <dbReference type="NCBI Taxonomy" id="390874"/>
    <lineage>
        <taxon>Bacteria</taxon>
        <taxon>Thermotogati</taxon>
        <taxon>Thermotogota</taxon>
        <taxon>Thermotogae</taxon>
        <taxon>Thermotogales</taxon>
        <taxon>Thermotogaceae</taxon>
        <taxon>Thermotoga</taxon>
    </lineage>
</organism>
<feature type="chain" id="PRO_1000001078" description="Dihydroxy-acid dehydratase">
    <location>
        <begin position="1"/>
        <end position="554"/>
    </location>
</feature>
<feature type="active site" description="Proton acceptor" evidence="1">
    <location>
        <position position="468"/>
    </location>
</feature>
<feature type="binding site" evidence="1">
    <location>
        <position position="78"/>
    </location>
    <ligand>
        <name>Mg(2+)</name>
        <dbReference type="ChEBI" id="CHEBI:18420"/>
    </ligand>
</feature>
<feature type="binding site" evidence="1">
    <location>
        <position position="119"/>
    </location>
    <ligand>
        <name>[2Fe-2S] cluster</name>
        <dbReference type="ChEBI" id="CHEBI:190135"/>
    </ligand>
</feature>
<feature type="binding site" evidence="1">
    <location>
        <position position="120"/>
    </location>
    <ligand>
        <name>Mg(2+)</name>
        <dbReference type="ChEBI" id="CHEBI:18420"/>
    </ligand>
</feature>
<feature type="binding site" description="via carbamate group" evidence="1">
    <location>
        <position position="121"/>
    </location>
    <ligand>
        <name>Mg(2+)</name>
        <dbReference type="ChEBI" id="CHEBI:18420"/>
    </ligand>
</feature>
<feature type="binding site" evidence="1">
    <location>
        <position position="191"/>
    </location>
    <ligand>
        <name>[2Fe-2S] cluster</name>
        <dbReference type="ChEBI" id="CHEBI:190135"/>
    </ligand>
</feature>
<feature type="binding site" evidence="1">
    <location>
        <position position="442"/>
    </location>
    <ligand>
        <name>Mg(2+)</name>
        <dbReference type="ChEBI" id="CHEBI:18420"/>
    </ligand>
</feature>
<feature type="modified residue" description="N6-carboxylysine" evidence="1">
    <location>
        <position position="121"/>
    </location>
</feature>